<gene>
    <name type="primary">Cntn6</name>
</gene>
<reference key="1">
    <citation type="journal article" date="2000" name="Gene">
        <title>Expression and regulation of a gene encoding neural recognition molecule NB-3 of the contactin/F3 subgroup in mouse brain.</title>
        <authorList>
            <person name="Lee S."/>
            <person name="Takeda Y."/>
            <person name="Kawano H."/>
            <person name="Hosoya H."/>
            <person name="Nomoto M."/>
            <person name="Fujimoto D."/>
            <person name="Takahashi N."/>
            <person name="Watanabe K."/>
        </authorList>
    </citation>
    <scope>NUCLEOTIDE SEQUENCE [MRNA] (ISOFORMS 1 AND 2)</scope>
    <scope>TISSUE SPECIFICITY</scope>
    <scope>DEVELOPMENTAL STAGE</scope>
    <source>
        <strain>129/SvJ</strain>
        <tissue>Brain</tissue>
    </source>
</reference>
<reference key="2">
    <citation type="journal article" date="2005" name="Science">
        <title>The transcriptional landscape of the mammalian genome.</title>
        <authorList>
            <person name="Carninci P."/>
            <person name="Kasukawa T."/>
            <person name="Katayama S."/>
            <person name="Gough J."/>
            <person name="Frith M.C."/>
            <person name="Maeda N."/>
            <person name="Oyama R."/>
            <person name="Ravasi T."/>
            <person name="Lenhard B."/>
            <person name="Wells C."/>
            <person name="Kodzius R."/>
            <person name="Shimokawa K."/>
            <person name="Bajic V.B."/>
            <person name="Brenner S.E."/>
            <person name="Batalov S."/>
            <person name="Forrest A.R."/>
            <person name="Zavolan M."/>
            <person name="Davis M.J."/>
            <person name="Wilming L.G."/>
            <person name="Aidinis V."/>
            <person name="Allen J.E."/>
            <person name="Ambesi-Impiombato A."/>
            <person name="Apweiler R."/>
            <person name="Aturaliya R.N."/>
            <person name="Bailey T.L."/>
            <person name="Bansal M."/>
            <person name="Baxter L."/>
            <person name="Beisel K.W."/>
            <person name="Bersano T."/>
            <person name="Bono H."/>
            <person name="Chalk A.M."/>
            <person name="Chiu K.P."/>
            <person name="Choudhary V."/>
            <person name="Christoffels A."/>
            <person name="Clutterbuck D.R."/>
            <person name="Crowe M.L."/>
            <person name="Dalla E."/>
            <person name="Dalrymple B.P."/>
            <person name="de Bono B."/>
            <person name="Della Gatta G."/>
            <person name="di Bernardo D."/>
            <person name="Down T."/>
            <person name="Engstrom P."/>
            <person name="Fagiolini M."/>
            <person name="Faulkner G."/>
            <person name="Fletcher C.F."/>
            <person name="Fukushima T."/>
            <person name="Furuno M."/>
            <person name="Futaki S."/>
            <person name="Gariboldi M."/>
            <person name="Georgii-Hemming P."/>
            <person name="Gingeras T.R."/>
            <person name="Gojobori T."/>
            <person name="Green R.E."/>
            <person name="Gustincich S."/>
            <person name="Harbers M."/>
            <person name="Hayashi Y."/>
            <person name="Hensch T.K."/>
            <person name="Hirokawa N."/>
            <person name="Hill D."/>
            <person name="Huminiecki L."/>
            <person name="Iacono M."/>
            <person name="Ikeo K."/>
            <person name="Iwama A."/>
            <person name="Ishikawa T."/>
            <person name="Jakt M."/>
            <person name="Kanapin A."/>
            <person name="Katoh M."/>
            <person name="Kawasawa Y."/>
            <person name="Kelso J."/>
            <person name="Kitamura H."/>
            <person name="Kitano H."/>
            <person name="Kollias G."/>
            <person name="Krishnan S.P."/>
            <person name="Kruger A."/>
            <person name="Kummerfeld S.K."/>
            <person name="Kurochkin I.V."/>
            <person name="Lareau L.F."/>
            <person name="Lazarevic D."/>
            <person name="Lipovich L."/>
            <person name="Liu J."/>
            <person name="Liuni S."/>
            <person name="McWilliam S."/>
            <person name="Madan Babu M."/>
            <person name="Madera M."/>
            <person name="Marchionni L."/>
            <person name="Matsuda H."/>
            <person name="Matsuzawa S."/>
            <person name="Miki H."/>
            <person name="Mignone F."/>
            <person name="Miyake S."/>
            <person name="Morris K."/>
            <person name="Mottagui-Tabar S."/>
            <person name="Mulder N."/>
            <person name="Nakano N."/>
            <person name="Nakauchi H."/>
            <person name="Ng P."/>
            <person name="Nilsson R."/>
            <person name="Nishiguchi S."/>
            <person name="Nishikawa S."/>
            <person name="Nori F."/>
            <person name="Ohara O."/>
            <person name="Okazaki Y."/>
            <person name="Orlando V."/>
            <person name="Pang K.C."/>
            <person name="Pavan W.J."/>
            <person name="Pavesi G."/>
            <person name="Pesole G."/>
            <person name="Petrovsky N."/>
            <person name="Piazza S."/>
            <person name="Reed J."/>
            <person name="Reid J.F."/>
            <person name="Ring B.Z."/>
            <person name="Ringwald M."/>
            <person name="Rost B."/>
            <person name="Ruan Y."/>
            <person name="Salzberg S.L."/>
            <person name="Sandelin A."/>
            <person name="Schneider C."/>
            <person name="Schoenbach C."/>
            <person name="Sekiguchi K."/>
            <person name="Semple C.A."/>
            <person name="Seno S."/>
            <person name="Sessa L."/>
            <person name="Sheng Y."/>
            <person name="Shibata Y."/>
            <person name="Shimada H."/>
            <person name="Shimada K."/>
            <person name="Silva D."/>
            <person name="Sinclair B."/>
            <person name="Sperling S."/>
            <person name="Stupka E."/>
            <person name="Sugiura K."/>
            <person name="Sultana R."/>
            <person name="Takenaka Y."/>
            <person name="Taki K."/>
            <person name="Tammoja K."/>
            <person name="Tan S.L."/>
            <person name="Tang S."/>
            <person name="Taylor M.S."/>
            <person name="Tegner J."/>
            <person name="Teichmann S.A."/>
            <person name="Ueda H.R."/>
            <person name="van Nimwegen E."/>
            <person name="Verardo R."/>
            <person name="Wei C.L."/>
            <person name="Yagi K."/>
            <person name="Yamanishi H."/>
            <person name="Zabarovsky E."/>
            <person name="Zhu S."/>
            <person name="Zimmer A."/>
            <person name="Hide W."/>
            <person name="Bult C."/>
            <person name="Grimmond S.M."/>
            <person name="Teasdale R.D."/>
            <person name="Liu E.T."/>
            <person name="Brusic V."/>
            <person name="Quackenbush J."/>
            <person name="Wahlestedt C."/>
            <person name="Mattick J.S."/>
            <person name="Hume D.A."/>
            <person name="Kai C."/>
            <person name="Sasaki D."/>
            <person name="Tomaru Y."/>
            <person name="Fukuda S."/>
            <person name="Kanamori-Katayama M."/>
            <person name="Suzuki M."/>
            <person name="Aoki J."/>
            <person name="Arakawa T."/>
            <person name="Iida J."/>
            <person name="Imamura K."/>
            <person name="Itoh M."/>
            <person name="Kato T."/>
            <person name="Kawaji H."/>
            <person name="Kawagashira N."/>
            <person name="Kawashima T."/>
            <person name="Kojima M."/>
            <person name="Kondo S."/>
            <person name="Konno H."/>
            <person name="Nakano K."/>
            <person name="Ninomiya N."/>
            <person name="Nishio T."/>
            <person name="Okada M."/>
            <person name="Plessy C."/>
            <person name="Shibata K."/>
            <person name="Shiraki T."/>
            <person name="Suzuki S."/>
            <person name="Tagami M."/>
            <person name="Waki K."/>
            <person name="Watahiki A."/>
            <person name="Okamura-Oho Y."/>
            <person name="Suzuki H."/>
            <person name="Kawai J."/>
            <person name="Hayashizaki Y."/>
        </authorList>
    </citation>
    <scope>NUCLEOTIDE SEQUENCE [LARGE SCALE MRNA] (ISOFORM 1)</scope>
    <source>
        <strain>C57BL/6J</strain>
        <tissue>Head</tissue>
    </source>
</reference>
<reference key="3">
    <citation type="journal article" date="2004" name="Genome Res.">
        <title>The status, quality, and expansion of the NIH full-length cDNA project: the Mammalian Gene Collection (MGC).</title>
        <authorList>
            <consortium name="The MGC Project Team"/>
        </authorList>
    </citation>
    <scope>NUCLEOTIDE SEQUENCE [LARGE SCALE MRNA] (ISOFORM 1)</scope>
    <source>
        <strain>C57BL/6J</strain>
        <tissue>Eye</tissue>
    </source>
</reference>
<reference key="4">
    <citation type="journal article" date="2003" name="J. Neurobiol.">
        <title>Impaired motor coordination in mice lacking neural recognition molecule NB-3 of the contactin/F3 subgroup.</title>
        <authorList>
            <person name="Takeda Y."/>
            <person name="Akasaka K."/>
            <person name="Lee S."/>
            <person name="Kobayashi S."/>
            <person name="Kawano H."/>
            <person name="Murayama S."/>
            <person name="Takahashi N."/>
            <person name="Hashimoto K."/>
            <person name="Kano M."/>
            <person name="Asano M."/>
            <person name="Sudo K."/>
            <person name="Iwakura Y."/>
            <person name="Watanabe K."/>
        </authorList>
    </citation>
    <scope>FUNCTION</scope>
    <scope>DISRUPTION PHENOTYPE</scope>
</reference>
<reference key="5">
    <citation type="journal article" date="2010" name="Proc. Natl. Acad. Sci. U.S.A.">
        <title>The protein tyrosine phosphatases PTPRZ and PTPRG bind to distinct members of the contactin family of neural recognition molecules.</title>
        <authorList>
            <person name="Bouyain S."/>
            <person name="Watkins D.J."/>
        </authorList>
    </citation>
    <scope>INTERACTION WITH PTPRG</scope>
</reference>
<feature type="signal peptide" evidence="3">
    <location>
        <begin position="1"/>
        <end position="19"/>
    </location>
</feature>
<feature type="chain" id="PRO_0000014729" description="Contactin-6">
    <location>
        <begin position="20"/>
        <end position="999"/>
    </location>
</feature>
<feature type="propeptide" id="PRO_0000014730" description="Removed in mature form" evidence="3">
    <location>
        <begin position="1000"/>
        <end position="1028"/>
    </location>
</feature>
<feature type="domain" description="Ig-like C2-type 1">
    <location>
        <begin position="32"/>
        <end position="117"/>
    </location>
</feature>
<feature type="domain" description="Ig-like C2-type 2">
    <location>
        <begin position="122"/>
        <end position="208"/>
    </location>
</feature>
<feature type="domain" description="Ig-like C2-type 3">
    <location>
        <begin position="227"/>
        <end position="308"/>
    </location>
</feature>
<feature type="domain" description="Ig-like C2-type 4">
    <location>
        <begin position="318"/>
        <end position="402"/>
    </location>
</feature>
<feature type="domain" description="Ig-like C2-type 5">
    <location>
        <begin position="408"/>
        <end position="502"/>
    </location>
</feature>
<feature type="domain" description="Ig-like C2-type 6">
    <location>
        <begin position="500"/>
        <end position="587"/>
    </location>
</feature>
<feature type="domain" description="Fibronectin type-III 1" evidence="5">
    <location>
        <begin position="600"/>
        <end position="698"/>
    </location>
</feature>
<feature type="domain" description="Fibronectin type-III 2" evidence="5">
    <location>
        <begin position="703"/>
        <end position="800"/>
    </location>
</feature>
<feature type="domain" description="Fibronectin type-III 3" evidence="5">
    <location>
        <begin position="805"/>
        <end position="901"/>
    </location>
</feature>
<feature type="domain" description="Fibronectin type-III 4" evidence="5">
    <location>
        <begin position="902"/>
        <end position="996"/>
    </location>
</feature>
<feature type="modified residue" description="Phosphotyrosine" evidence="2">
    <location>
        <position position="882"/>
    </location>
</feature>
<feature type="lipid moiety-binding region" description="GPI-anchor amidated serine" evidence="3">
    <location>
        <position position="999"/>
    </location>
</feature>
<feature type="glycosylation site" description="N-linked (GlcNAc...) asparagine" evidence="3">
    <location>
        <position position="65"/>
    </location>
</feature>
<feature type="glycosylation site" description="N-linked (GlcNAc...) asparagine" evidence="3">
    <location>
        <position position="193"/>
    </location>
</feature>
<feature type="glycosylation site" description="N-linked (GlcNAc...) asparagine" evidence="3">
    <location>
        <position position="368"/>
    </location>
</feature>
<feature type="glycosylation site" description="N-linked (GlcNAc...) asparagine" evidence="3">
    <location>
        <position position="377"/>
    </location>
</feature>
<feature type="glycosylation site" description="N-linked (GlcNAc...) asparagine" evidence="3">
    <location>
        <position position="468"/>
    </location>
</feature>
<feature type="glycosylation site" description="N-linked (GlcNAc...) asparagine" evidence="3">
    <location>
        <position position="659"/>
    </location>
</feature>
<feature type="glycosylation site" description="N-linked (GlcNAc...) asparagine" evidence="3">
    <location>
        <position position="765"/>
    </location>
</feature>
<feature type="glycosylation site" description="N-linked (GlcNAc...) asparagine" evidence="3">
    <location>
        <position position="860"/>
    </location>
</feature>
<feature type="glycosylation site" description="N-linked (GlcNAc...) asparagine" evidence="3">
    <location>
        <position position="865"/>
    </location>
</feature>
<feature type="glycosylation site" description="N-linked (GlcNAc...) asparagine" evidence="3">
    <location>
        <position position="895"/>
    </location>
</feature>
<feature type="glycosylation site" description="N-linked (GlcNAc...) asparagine" evidence="3">
    <location>
        <position position="931"/>
    </location>
</feature>
<feature type="glycosylation site" description="N-linked (GlcNAc...) asparagine" evidence="3">
    <location>
        <position position="956"/>
    </location>
</feature>
<feature type="glycosylation site" description="N-linked (GlcNAc...) asparagine" evidence="3">
    <location>
        <position position="957"/>
    </location>
</feature>
<feature type="disulfide bond" evidence="4">
    <location>
        <begin position="50"/>
        <end position="100"/>
    </location>
</feature>
<feature type="disulfide bond" evidence="4">
    <location>
        <begin position="144"/>
        <end position="196"/>
    </location>
</feature>
<feature type="disulfide bond" evidence="4">
    <location>
        <begin position="249"/>
        <end position="297"/>
    </location>
</feature>
<feature type="disulfide bond" evidence="4">
    <location>
        <begin position="339"/>
        <end position="386"/>
    </location>
</feature>
<feature type="disulfide bond" evidence="4">
    <location>
        <begin position="431"/>
        <end position="479"/>
    </location>
</feature>
<feature type="disulfide bond" evidence="4">
    <location>
        <begin position="521"/>
        <end position="577"/>
    </location>
</feature>
<feature type="splice variant" id="VSP_011968" description="In isoform 2." evidence="9">
    <location>
        <begin position="62"/>
        <end position="78"/>
    </location>
</feature>
<feature type="sequence conflict" description="In Ref. 1; BAA92367." evidence="10" ref="1">
    <original>K</original>
    <variation>R</variation>
    <location>
        <position position="262"/>
    </location>
</feature>
<feature type="sequence conflict" description="In Ref. 1; BAA92367." evidence="10" ref="1">
    <original>L</original>
    <variation>P</variation>
    <location>
        <position position="892"/>
    </location>
</feature>
<feature type="sequence conflict" description="In Ref. 1; BAA92367." evidence="10" ref="1">
    <original>L</original>
    <variation>V</variation>
    <location>
        <position position="921"/>
    </location>
</feature>
<feature type="strand" evidence="12">
    <location>
        <begin position="132"/>
        <end position="134"/>
    </location>
</feature>
<feature type="strand" evidence="12">
    <location>
        <begin position="140"/>
        <end position="142"/>
    </location>
</feature>
<feature type="strand" evidence="12">
    <location>
        <begin position="148"/>
        <end position="151"/>
    </location>
</feature>
<feature type="strand" evidence="12">
    <location>
        <begin position="153"/>
        <end position="159"/>
    </location>
</feature>
<feature type="strand" evidence="12">
    <location>
        <begin position="172"/>
        <end position="174"/>
    </location>
</feature>
<feature type="turn" evidence="12">
    <location>
        <begin position="176"/>
        <end position="178"/>
    </location>
</feature>
<feature type="strand" evidence="12">
    <location>
        <begin position="181"/>
        <end position="185"/>
    </location>
</feature>
<feature type="helix" evidence="12">
    <location>
        <begin position="188"/>
        <end position="190"/>
    </location>
</feature>
<feature type="strand" evidence="12">
    <location>
        <begin position="192"/>
        <end position="200"/>
    </location>
</feature>
<feature type="turn" evidence="12">
    <location>
        <begin position="201"/>
        <end position="204"/>
    </location>
</feature>
<feature type="strand" evidence="12">
    <location>
        <begin position="205"/>
        <end position="208"/>
    </location>
</feature>
<feature type="strand" evidence="12">
    <location>
        <begin position="212"/>
        <end position="216"/>
    </location>
</feature>
<feature type="strand" evidence="12">
    <location>
        <begin position="225"/>
        <end position="231"/>
    </location>
</feature>
<feature type="strand" evidence="12">
    <location>
        <begin position="235"/>
        <end position="240"/>
    </location>
</feature>
<feature type="strand" evidence="12">
    <location>
        <begin position="245"/>
        <end position="248"/>
    </location>
</feature>
<feature type="strand" evidence="12">
    <location>
        <begin position="250"/>
        <end position="255"/>
    </location>
</feature>
<feature type="strand" evidence="12">
    <location>
        <begin position="258"/>
        <end position="263"/>
    </location>
</feature>
<feature type="strand" evidence="12">
    <location>
        <begin position="274"/>
        <end position="276"/>
    </location>
</feature>
<feature type="turn" evidence="12">
    <location>
        <begin position="277"/>
        <end position="280"/>
    </location>
</feature>
<feature type="strand" evidence="12">
    <location>
        <begin position="281"/>
        <end position="284"/>
    </location>
</feature>
<feature type="helix" evidence="12">
    <location>
        <begin position="289"/>
        <end position="291"/>
    </location>
</feature>
<feature type="strand" evidence="12">
    <location>
        <begin position="293"/>
        <end position="301"/>
    </location>
</feature>
<feature type="strand" evidence="12">
    <location>
        <begin position="304"/>
        <end position="315"/>
    </location>
</feature>
<feature type="strand" evidence="11">
    <location>
        <begin position="602"/>
        <end position="609"/>
    </location>
</feature>
<feature type="strand" evidence="11">
    <location>
        <begin position="611"/>
        <end position="619"/>
    </location>
</feature>
<feature type="strand" evidence="11">
    <location>
        <begin position="630"/>
        <end position="636"/>
    </location>
</feature>
<feature type="strand" evidence="11">
    <location>
        <begin position="640"/>
        <end position="642"/>
    </location>
</feature>
<feature type="strand" evidence="11">
    <location>
        <begin position="647"/>
        <end position="654"/>
    </location>
</feature>
<feature type="strand" evidence="11">
    <location>
        <begin position="659"/>
        <end position="663"/>
    </location>
</feature>
<feature type="strand" evidence="11">
    <location>
        <begin position="670"/>
        <end position="678"/>
    </location>
</feature>
<feature type="strand" evidence="11">
    <location>
        <begin position="683"/>
        <end position="686"/>
    </location>
</feature>
<feature type="strand" evidence="11">
    <location>
        <begin position="705"/>
        <end position="709"/>
    </location>
</feature>
<feature type="strand" evidence="11">
    <location>
        <begin position="716"/>
        <end position="722"/>
    </location>
</feature>
<feature type="helix" evidence="11">
    <location>
        <begin position="726"/>
        <end position="728"/>
    </location>
</feature>
<feature type="strand" evidence="11">
    <location>
        <begin position="731"/>
        <end position="733"/>
    </location>
</feature>
<feature type="strand" evidence="11">
    <location>
        <begin position="735"/>
        <end position="742"/>
    </location>
</feature>
<feature type="strand" evidence="11">
    <location>
        <begin position="749"/>
        <end position="755"/>
    </location>
</feature>
<feature type="strand" evidence="11">
    <location>
        <begin position="760"/>
        <end position="764"/>
    </location>
</feature>
<feature type="strand" evidence="11">
    <location>
        <begin position="773"/>
        <end position="782"/>
    </location>
</feature>
<feature type="strand" evidence="11">
    <location>
        <begin position="793"/>
        <end position="796"/>
    </location>
</feature>
<feature type="strand" evidence="11">
    <location>
        <begin position="810"/>
        <end position="812"/>
    </location>
</feature>
<feature type="strand" evidence="11">
    <location>
        <begin position="814"/>
        <end position="817"/>
    </location>
</feature>
<feature type="strand" evidence="11">
    <location>
        <begin position="819"/>
        <end position="822"/>
    </location>
</feature>
<feature type="strand" evidence="11">
    <location>
        <begin position="837"/>
        <end position="845"/>
    </location>
</feature>
<feature type="strand" evidence="11">
    <location>
        <begin position="850"/>
        <end position="858"/>
    </location>
</feature>
<feature type="strand" evidence="11">
    <location>
        <begin position="863"/>
        <end position="866"/>
    </location>
</feature>
<feature type="strand" evidence="11">
    <location>
        <begin position="874"/>
        <end position="883"/>
    </location>
</feature>
<feature type="strand" evidence="11">
    <location>
        <begin position="894"/>
        <end position="897"/>
    </location>
</feature>
<comment type="function">
    <text evidence="1 7">Contactins mediate cell surface interactions during nervous system development. Participates in oligodendrocytes generation by acting as a ligand of NOTCH1. Its association with NOTCH1 promotes NOTCH1 activation through the released notch intracellular domain (NICD) and subsequent translocation to the nucleus (By similarity). Involved in motor coordination.</text>
</comment>
<comment type="subunit">
    <text evidence="8">Interacts with PTPRG.</text>
</comment>
<comment type="interaction">
    <interactant intactId="EBI-7703151">
        <id>Q9JMB8</id>
    </interactant>
    <interactant intactId="EBI-7703109">
        <id>P70232</id>
        <label>Chl1</label>
    </interactant>
    <organismsDiffer>false</organismsDiffer>
    <experiments>5</experiments>
</comment>
<comment type="subcellular location">
    <subcellularLocation>
        <location evidence="1">Cell membrane</location>
        <topology evidence="1">Lipid-anchor</topology>
        <topology evidence="1">GPI-anchor</topology>
    </subcellularLocation>
</comment>
<comment type="alternative products">
    <event type="alternative splicing"/>
    <isoform>
        <id>Q9JMB8-1</id>
        <name>1</name>
        <sequence type="displayed"/>
    </isoform>
    <isoform>
        <id>Q9JMB8-2</id>
        <name>2</name>
        <sequence type="described" ref="VSP_011968"/>
    </isoform>
</comment>
<comment type="tissue specificity">
    <text evidence="6">Expressed in brain. In brain, it is preferentially expressed in the accessory olfactory bulb, layers II/III and V of the cerebral cortex, piriform cortex, anterior thalamic nuclei, locus coeruleus of the pons and mesencephalic trigeminal nucleus and in Purkinje cells of the cerebellum.</text>
</comment>
<comment type="developmental stage">
    <text evidence="6">Highly expressed after birth, reaching a maximum at the postnatal day 7, and declines thereafter in the cerebrum, whereas it increases in the cerebellum to adulthood.</text>
</comment>
<comment type="disruption phenotype">
    <text evidence="7">Mice are viable and fertile, the formation and organization of all nuclei and layers throughout the brains are apparently normal. They are however slow to learn to stay on the rotating rod in the rotorod test during repeated trials, and display dysfunction of equilibrium and vestibular senses in the wire hang and horizontal rod-walking tests.</text>
</comment>
<comment type="similarity">
    <text evidence="10">Belongs to the immunoglobulin superfamily. Contactin family.</text>
</comment>
<dbReference type="EMBL" id="AB032602">
    <property type="protein sequence ID" value="BAA92367.1"/>
    <property type="molecule type" value="mRNA"/>
</dbReference>
<dbReference type="EMBL" id="AK052972">
    <property type="protein sequence ID" value="BAC35227.1"/>
    <property type="molecule type" value="mRNA"/>
</dbReference>
<dbReference type="EMBL" id="BC076594">
    <property type="protein sequence ID" value="AAH76594.1"/>
    <property type="molecule type" value="mRNA"/>
</dbReference>
<dbReference type="CCDS" id="CCDS20394.1">
    <molecule id="Q9JMB8-1"/>
</dbReference>
<dbReference type="RefSeq" id="NP_001398083.1">
    <molecule id="Q9JMB8-1"/>
    <property type="nucleotide sequence ID" value="NM_001411154.1"/>
</dbReference>
<dbReference type="RefSeq" id="NP_001398084.1">
    <molecule id="Q9JMB8-1"/>
    <property type="nucleotide sequence ID" value="NM_001411155.1"/>
</dbReference>
<dbReference type="RefSeq" id="NP_001398085.1">
    <molecule id="Q9JMB8-1"/>
    <property type="nucleotide sequence ID" value="NM_001411156.1"/>
</dbReference>
<dbReference type="RefSeq" id="NP_001398086.1">
    <molecule id="Q9JMB8-1"/>
    <property type="nucleotide sequence ID" value="NM_001411157.1"/>
</dbReference>
<dbReference type="RefSeq" id="NP_001398087.1">
    <molecule id="Q9JMB8-1"/>
    <property type="nucleotide sequence ID" value="NM_001411158.1"/>
</dbReference>
<dbReference type="RefSeq" id="NP_001398088.1">
    <molecule id="Q9JMB8-1"/>
    <property type="nucleotide sequence ID" value="NM_001411159.1"/>
</dbReference>
<dbReference type="RefSeq" id="NP_001398089.1">
    <molecule id="Q9JMB8-1"/>
    <property type="nucleotide sequence ID" value="NM_001411160.1"/>
</dbReference>
<dbReference type="RefSeq" id="NP_001398090.1">
    <molecule id="Q9JMB8-1"/>
    <property type="nucleotide sequence ID" value="NM_001411161.1"/>
</dbReference>
<dbReference type="RefSeq" id="NP_001398091.1">
    <molecule id="Q9JMB8-2"/>
    <property type="nucleotide sequence ID" value="NM_001411162.1"/>
</dbReference>
<dbReference type="RefSeq" id="NP_001398092.1">
    <molecule id="Q9JMB8-2"/>
    <property type="nucleotide sequence ID" value="NM_001411163.1"/>
</dbReference>
<dbReference type="RefSeq" id="NP_059079.2">
    <molecule id="Q9JMB8-1"/>
    <property type="nucleotide sequence ID" value="NM_017383.3"/>
</dbReference>
<dbReference type="RefSeq" id="XP_006506444.1">
    <molecule id="Q9JMB8-1"/>
    <property type="nucleotide sequence ID" value="XM_006506381.5"/>
</dbReference>
<dbReference type="RefSeq" id="XP_006506445.1">
    <property type="nucleotide sequence ID" value="XM_006506382.3"/>
</dbReference>
<dbReference type="RefSeq" id="XP_006506446.1">
    <property type="nucleotide sequence ID" value="XM_006506383.3"/>
</dbReference>
<dbReference type="RefSeq" id="XP_006506447.1">
    <property type="nucleotide sequence ID" value="XM_006506384.2"/>
</dbReference>
<dbReference type="RefSeq" id="XP_017177167.1">
    <property type="nucleotide sequence ID" value="XM_017321678.1"/>
</dbReference>
<dbReference type="RefSeq" id="XP_017177168.1">
    <property type="nucleotide sequence ID" value="XM_017321679.1"/>
</dbReference>
<dbReference type="RefSeq" id="XP_036022178.1">
    <molecule id="Q9JMB8-1"/>
    <property type="nucleotide sequence ID" value="XM_036166285.1"/>
</dbReference>
<dbReference type="RefSeq" id="XP_036022179.1">
    <molecule id="Q9JMB8-1"/>
    <property type="nucleotide sequence ID" value="XM_036166286.1"/>
</dbReference>
<dbReference type="RefSeq" id="XP_036022180.1">
    <molecule id="Q9JMB8-2"/>
    <property type="nucleotide sequence ID" value="XM_036166287.1"/>
</dbReference>
<dbReference type="RefSeq" id="XP_036022181.1">
    <molecule id="Q9JMB8-2"/>
    <property type="nucleotide sequence ID" value="XM_036166288.1"/>
</dbReference>
<dbReference type="RefSeq" id="XP_036022182.1">
    <molecule id="Q9JMB8-2"/>
    <property type="nucleotide sequence ID" value="XM_036166289.1"/>
</dbReference>
<dbReference type="RefSeq" id="XP_036022183.1">
    <molecule id="Q9JMB8-2"/>
    <property type="nucleotide sequence ID" value="XM_036166290.1"/>
</dbReference>
<dbReference type="PDB" id="5E55">
    <property type="method" value="X-ray"/>
    <property type="resolution" value="2.70 A"/>
    <property type="chains" value="A/B=597-900"/>
</dbReference>
<dbReference type="PDB" id="5E5U">
    <property type="method" value="X-ray"/>
    <property type="resolution" value="2.00 A"/>
    <property type="chains" value="B/D=119-316"/>
</dbReference>
<dbReference type="PDBsum" id="5E55"/>
<dbReference type="PDBsum" id="5E5U"/>
<dbReference type="SMR" id="Q9JMB8"/>
<dbReference type="BioGRID" id="207499">
    <property type="interactions" value="1"/>
</dbReference>
<dbReference type="FunCoup" id="Q9JMB8">
    <property type="interactions" value="61"/>
</dbReference>
<dbReference type="IntAct" id="Q9JMB8">
    <property type="interactions" value="1"/>
</dbReference>
<dbReference type="MINT" id="Q9JMB8"/>
<dbReference type="STRING" id="10090.ENSMUSP00000086623"/>
<dbReference type="GlyConnect" id="2229">
    <property type="glycosylation" value="1 N-Linked glycan (1 site)"/>
</dbReference>
<dbReference type="GlyCosmos" id="Q9JMB8">
    <property type="glycosylation" value="13 sites, 1 glycan"/>
</dbReference>
<dbReference type="GlyGen" id="Q9JMB8">
    <property type="glycosylation" value="13 sites, 6 N-linked glycans (7 sites)"/>
</dbReference>
<dbReference type="iPTMnet" id="Q9JMB8"/>
<dbReference type="PhosphoSitePlus" id="Q9JMB8"/>
<dbReference type="PaxDb" id="10090-ENSMUSP00000086623"/>
<dbReference type="ProteomicsDB" id="283586">
    <molecule id="Q9JMB8-1"/>
</dbReference>
<dbReference type="ProteomicsDB" id="283587">
    <molecule id="Q9JMB8-2"/>
</dbReference>
<dbReference type="Antibodypedia" id="9868">
    <property type="antibodies" value="134 antibodies from 29 providers"/>
</dbReference>
<dbReference type="DNASU" id="53870"/>
<dbReference type="Ensembl" id="ENSMUST00000089215.12">
    <molecule id="Q9JMB8-1"/>
    <property type="protein sequence ID" value="ENSMUSP00000086623.6"/>
    <property type="gene ID" value="ENSMUSG00000030092.15"/>
</dbReference>
<dbReference type="Ensembl" id="ENSMUST00000162872.2">
    <molecule id="Q9JMB8-1"/>
    <property type="protein sequence ID" value="ENSMUSP00000124025.2"/>
    <property type="gene ID" value="ENSMUSG00000030092.15"/>
</dbReference>
<dbReference type="GeneID" id="53870"/>
<dbReference type="KEGG" id="mmu:53870"/>
<dbReference type="UCSC" id="uc009dco.1">
    <molecule id="Q9JMB8-1"/>
    <property type="organism name" value="mouse"/>
</dbReference>
<dbReference type="AGR" id="MGI:1858223"/>
<dbReference type="CTD" id="27255"/>
<dbReference type="MGI" id="MGI:1858223">
    <property type="gene designation" value="Cntn6"/>
</dbReference>
<dbReference type="VEuPathDB" id="HostDB:ENSMUSG00000030092"/>
<dbReference type="eggNOG" id="KOG3513">
    <property type="taxonomic scope" value="Eukaryota"/>
</dbReference>
<dbReference type="GeneTree" id="ENSGT00940000160606"/>
<dbReference type="InParanoid" id="Q9JMB8"/>
<dbReference type="OMA" id="ICNVTRS"/>
<dbReference type="OrthoDB" id="5982258at2759"/>
<dbReference type="PhylomeDB" id="Q9JMB8"/>
<dbReference type="TreeFam" id="TF351103"/>
<dbReference type="BioGRID-ORCS" id="53870">
    <property type="hits" value="2 hits in 76 CRISPR screens"/>
</dbReference>
<dbReference type="CD-CODE" id="CE726F99">
    <property type="entry name" value="Postsynaptic density"/>
</dbReference>
<dbReference type="ChiTaRS" id="Cntn6">
    <property type="organism name" value="mouse"/>
</dbReference>
<dbReference type="PRO" id="PR:Q9JMB8"/>
<dbReference type="Proteomes" id="UP000000589">
    <property type="component" value="Chromosome 6"/>
</dbReference>
<dbReference type="RNAct" id="Q9JMB8">
    <property type="molecule type" value="protein"/>
</dbReference>
<dbReference type="Bgee" id="ENSMUSG00000030092">
    <property type="expression patterns" value="Expressed in trigeminal nucleus and 141 other cell types or tissues"/>
</dbReference>
<dbReference type="ExpressionAtlas" id="Q9JMB8">
    <property type="expression patterns" value="baseline and differential"/>
</dbReference>
<dbReference type="GO" id="GO:0098688">
    <property type="term" value="C:parallel fiber to Purkinje cell synapse"/>
    <property type="evidence" value="ECO:0000314"/>
    <property type="project" value="SynGO"/>
</dbReference>
<dbReference type="GO" id="GO:0005886">
    <property type="term" value="C:plasma membrane"/>
    <property type="evidence" value="ECO:0000314"/>
    <property type="project" value="MGI"/>
</dbReference>
<dbReference type="GO" id="GO:0098793">
    <property type="term" value="C:presynapse"/>
    <property type="evidence" value="ECO:0000314"/>
    <property type="project" value="SynGO"/>
</dbReference>
<dbReference type="GO" id="GO:0042734">
    <property type="term" value="C:presynaptic membrane"/>
    <property type="evidence" value="ECO:0000314"/>
    <property type="project" value="SynGO"/>
</dbReference>
<dbReference type="GO" id="GO:0098552">
    <property type="term" value="C:side of membrane"/>
    <property type="evidence" value="ECO:0007669"/>
    <property type="project" value="UniProtKB-KW"/>
</dbReference>
<dbReference type="GO" id="GO:0007155">
    <property type="term" value="P:cell adhesion"/>
    <property type="evidence" value="ECO:0007669"/>
    <property type="project" value="UniProtKB-KW"/>
</dbReference>
<dbReference type="GO" id="GO:0007219">
    <property type="term" value="P:Notch signaling pathway"/>
    <property type="evidence" value="ECO:0007669"/>
    <property type="project" value="UniProtKB-KW"/>
</dbReference>
<dbReference type="GO" id="GO:0045747">
    <property type="term" value="P:positive regulation of Notch signaling pathway"/>
    <property type="evidence" value="ECO:0000270"/>
    <property type="project" value="MGI"/>
</dbReference>
<dbReference type="CDD" id="cd00063">
    <property type="entry name" value="FN3"/>
    <property type="match status" value="4"/>
</dbReference>
<dbReference type="CDD" id="cd04969">
    <property type="entry name" value="Ig5_Contactin"/>
    <property type="match status" value="1"/>
</dbReference>
<dbReference type="FunFam" id="2.60.40.10:FF:000035">
    <property type="entry name" value="Contactin 1"/>
    <property type="match status" value="1"/>
</dbReference>
<dbReference type="FunFam" id="2.60.40.10:FF:000044">
    <property type="entry name" value="Contactin 1"/>
    <property type="match status" value="1"/>
</dbReference>
<dbReference type="FunFam" id="2.60.40.10:FF:000047">
    <property type="entry name" value="Contactin 1"/>
    <property type="match status" value="1"/>
</dbReference>
<dbReference type="FunFam" id="2.60.40.10:FF:000052">
    <property type="entry name" value="Contactin 1"/>
    <property type="match status" value="1"/>
</dbReference>
<dbReference type="FunFam" id="2.60.40.10:FF:000054">
    <property type="entry name" value="Contactin 1"/>
    <property type="match status" value="1"/>
</dbReference>
<dbReference type="FunFam" id="2.60.40.10:FF:000064">
    <property type="entry name" value="Contactin 1"/>
    <property type="match status" value="1"/>
</dbReference>
<dbReference type="FunFam" id="2.60.40.10:FF:000004">
    <property type="entry name" value="DCC isoform 1"/>
    <property type="match status" value="2"/>
</dbReference>
<dbReference type="FunFam" id="2.60.40.10:FF:000005">
    <property type="entry name" value="Neuronal cell adhesion molecule"/>
    <property type="match status" value="1"/>
</dbReference>
<dbReference type="FunFam" id="2.60.40.10:FF:000028">
    <property type="entry name" value="Neuronal cell adhesion molecule"/>
    <property type="match status" value="1"/>
</dbReference>
<dbReference type="Gene3D" id="2.60.40.10">
    <property type="entry name" value="Immunoglobulins"/>
    <property type="match status" value="10"/>
</dbReference>
<dbReference type="InterPro" id="IPR003961">
    <property type="entry name" value="FN3_dom"/>
</dbReference>
<dbReference type="InterPro" id="IPR036116">
    <property type="entry name" value="FN3_sf"/>
</dbReference>
<dbReference type="InterPro" id="IPR007110">
    <property type="entry name" value="Ig-like_dom"/>
</dbReference>
<dbReference type="InterPro" id="IPR036179">
    <property type="entry name" value="Ig-like_dom_sf"/>
</dbReference>
<dbReference type="InterPro" id="IPR013783">
    <property type="entry name" value="Ig-like_fold"/>
</dbReference>
<dbReference type="InterPro" id="IPR013098">
    <property type="entry name" value="Ig_I-set"/>
</dbReference>
<dbReference type="InterPro" id="IPR003599">
    <property type="entry name" value="Ig_sub"/>
</dbReference>
<dbReference type="InterPro" id="IPR003598">
    <property type="entry name" value="Ig_sub2"/>
</dbReference>
<dbReference type="PANTHER" id="PTHR44170:SF38">
    <property type="entry name" value="CONTACTIN 6"/>
    <property type="match status" value="1"/>
</dbReference>
<dbReference type="PANTHER" id="PTHR44170">
    <property type="entry name" value="PROTEIN SIDEKICK"/>
    <property type="match status" value="1"/>
</dbReference>
<dbReference type="Pfam" id="PF00041">
    <property type="entry name" value="fn3"/>
    <property type="match status" value="2"/>
</dbReference>
<dbReference type="Pfam" id="PF07679">
    <property type="entry name" value="I-set"/>
    <property type="match status" value="2"/>
</dbReference>
<dbReference type="Pfam" id="PF13927">
    <property type="entry name" value="Ig_3"/>
    <property type="match status" value="4"/>
</dbReference>
<dbReference type="SMART" id="SM00060">
    <property type="entry name" value="FN3"/>
    <property type="match status" value="4"/>
</dbReference>
<dbReference type="SMART" id="SM00409">
    <property type="entry name" value="IG"/>
    <property type="match status" value="6"/>
</dbReference>
<dbReference type="SMART" id="SM00408">
    <property type="entry name" value="IGc2"/>
    <property type="match status" value="6"/>
</dbReference>
<dbReference type="SUPFAM" id="SSF49265">
    <property type="entry name" value="Fibronectin type III"/>
    <property type="match status" value="2"/>
</dbReference>
<dbReference type="SUPFAM" id="SSF48726">
    <property type="entry name" value="Immunoglobulin"/>
    <property type="match status" value="6"/>
</dbReference>
<dbReference type="PROSITE" id="PS50853">
    <property type="entry name" value="FN3"/>
    <property type="match status" value="4"/>
</dbReference>
<dbReference type="PROSITE" id="PS50835">
    <property type="entry name" value="IG_LIKE"/>
    <property type="match status" value="6"/>
</dbReference>
<evidence type="ECO:0000250" key="1"/>
<evidence type="ECO:0000250" key="2">
    <source>
        <dbReference type="UniProtKB" id="Q9UQ52"/>
    </source>
</evidence>
<evidence type="ECO:0000255" key="3"/>
<evidence type="ECO:0000255" key="4">
    <source>
        <dbReference type="PROSITE-ProRule" id="PRU00114"/>
    </source>
</evidence>
<evidence type="ECO:0000255" key="5">
    <source>
        <dbReference type="PROSITE-ProRule" id="PRU00316"/>
    </source>
</evidence>
<evidence type="ECO:0000269" key="6">
    <source>
    </source>
</evidence>
<evidence type="ECO:0000269" key="7">
    <source>
    </source>
</evidence>
<evidence type="ECO:0000269" key="8">
    <source>
    </source>
</evidence>
<evidence type="ECO:0000303" key="9">
    <source>
    </source>
</evidence>
<evidence type="ECO:0000305" key="10"/>
<evidence type="ECO:0007829" key="11">
    <source>
        <dbReference type="PDB" id="5E55"/>
    </source>
</evidence>
<evidence type="ECO:0007829" key="12">
    <source>
        <dbReference type="PDB" id="5E5U"/>
    </source>
</evidence>
<proteinExistence type="evidence at protein level"/>
<keyword id="KW-0002">3D-structure</keyword>
<keyword id="KW-0025">Alternative splicing</keyword>
<keyword id="KW-0130">Cell adhesion</keyword>
<keyword id="KW-1003">Cell membrane</keyword>
<keyword id="KW-1015">Disulfide bond</keyword>
<keyword id="KW-0325">Glycoprotein</keyword>
<keyword id="KW-0336">GPI-anchor</keyword>
<keyword id="KW-0393">Immunoglobulin domain</keyword>
<keyword id="KW-0449">Lipoprotein</keyword>
<keyword id="KW-0472">Membrane</keyword>
<keyword id="KW-0914">Notch signaling pathway</keyword>
<keyword id="KW-0597">Phosphoprotein</keyword>
<keyword id="KW-1185">Reference proteome</keyword>
<keyword id="KW-0677">Repeat</keyword>
<keyword id="KW-0732">Signal</keyword>
<name>CNTN6_MOUSE</name>
<accession>Q9JMB8</accession>
<accession>Q8C6X1</accession>
<protein>
    <recommendedName>
        <fullName>Contactin-6</fullName>
    </recommendedName>
    <alternativeName>
        <fullName>Neural recognition molecule NB-3</fullName>
        <shortName>mNB-3</shortName>
    </alternativeName>
</protein>
<organism>
    <name type="scientific">Mus musculus</name>
    <name type="common">Mouse</name>
    <dbReference type="NCBI Taxonomy" id="10090"/>
    <lineage>
        <taxon>Eukaryota</taxon>
        <taxon>Metazoa</taxon>
        <taxon>Chordata</taxon>
        <taxon>Craniata</taxon>
        <taxon>Vertebrata</taxon>
        <taxon>Euteleostomi</taxon>
        <taxon>Mammalia</taxon>
        <taxon>Eutheria</taxon>
        <taxon>Euarchontoglires</taxon>
        <taxon>Glires</taxon>
        <taxon>Rodentia</taxon>
        <taxon>Myomorpha</taxon>
        <taxon>Muroidea</taxon>
        <taxon>Muridae</taxon>
        <taxon>Murinae</taxon>
        <taxon>Mus</taxon>
        <taxon>Mus</taxon>
    </lineage>
</organism>
<sequence length="1028" mass="113761">MRLLWKLVILLPLINSCAGEGRFSRPIFIQEPQDVIFPLDLSRSEIILTCTANGYPSPHYRWKQNGTDIDFGMTYHYRLDGGSLAISSPRTDQDIGIYQCLATNPVGTILSRKAKLQFAYIEDFETKTRSTVSVREGQGVVLLCGPPPHFGELSYAWTFNDSPLYVQEDKRRFVSQDTGNLYFAKVEPSDVGNYTCFVTNKEAHRSVQGPPTPLVLRTDGVMGEYEPKIEVRFPETIQAAKDSSIKLECFALGNPVPDISWKRLDGSPMPGKIKYSKSQAILEIPKFQQEDEGFYECIAGNLRGRNLAKGQLIFYAPPEWEQKIQNTYLSIYDSLFWECKASGNPNPSYTWLKNGQRLNTEERIQIENGTLIITMLNISDSGIYQCAAENKYQTIYANAELRVLASAPDFSKNPIKKISVVQVGGDISIECKPNAFPKASISWKRGTENLKQSKRVLFLEDGSLKICNVTRADAGSYTCVATNQFGNGKSSGGLVVKERTIITVPPSKMDVTVGESIVLPCQVSHDPTMEVLFVWYFNGDIIDLKKGVAHFERIGGESVGDLMIRNIQLGHSGKYLCTVQTTLERLSAVADIIVRGPPGPPEDVKVEHISSTTSQLSWRPGPDNNSPIQIFTIQTRTPFSVGWQAVATVPEILNGQTYNATVVGLSPWVEYEFRVVAGNNIGIGEPSKPSELLRTKASVPNVAPGNINGGGGSRSELVITWEAIPEELQNGEGFGYIVMFRPVGTTAWMKERVALVESSKFIYRNESIMPLSPFEVKVGVYNNEGEGSLSTVTIVYSGEDEPQLAPRGTSVQSFSASEMEVSWNAIAWNRNTGRVLGYEVLYWTDNSKESMIGKIRVSGNVTTKNITGLRANTIYFASVRAYNTAGTGPSSLPVNVTTKKSPPSQPPANIAWKLSNSKLCLNWEHVKTMENESEVLGYKILYRQNRQSKTHILETNNTSAELLVPFEEDYLIEIRTVSDGGDGSSSEEIRIPKMSSLSSTGVQISKPSTQSLSMVGVFYCFAIHPLSR</sequence>